<organism>
    <name type="scientific">Kineococcus radiotolerans (strain ATCC BAA-149 / DSM 14245 / SRS30216)</name>
    <dbReference type="NCBI Taxonomy" id="266940"/>
    <lineage>
        <taxon>Bacteria</taxon>
        <taxon>Bacillati</taxon>
        <taxon>Actinomycetota</taxon>
        <taxon>Actinomycetes</taxon>
        <taxon>Kineosporiales</taxon>
        <taxon>Kineosporiaceae</taxon>
        <taxon>Kineococcus</taxon>
    </lineage>
</organism>
<reference key="1">
    <citation type="journal article" date="2008" name="PLoS ONE">
        <title>Survival in nuclear waste, extreme resistance, and potential applications gleaned from the genome sequence of Kineococcus radiotolerans SRS30216.</title>
        <authorList>
            <person name="Bagwell C.E."/>
            <person name="Bhat S."/>
            <person name="Hawkins G.M."/>
            <person name="Smith B.W."/>
            <person name="Biswas T."/>
            <person name="Hoover T.R."/>
            <person name="Saunders E."/>
            <person name="Han C.S."/>
            <person name="Tsodikov O.V."/>
            <person name="Shimkets L.J."/>
        </authorList>
    </citation>
    <scope>NUCLEOTIDE SEQUENCE [LARGE SCALE GENOMIC DNA]</scope>
    <source>
        <strain>ATCC BAA-149 / DSM 14245 / SRS30216</strain>
    </source>
</reference>
<gene>
    <name evidence="1" type="primary">ligA</name>
    <name type="ordered locus">Krad_1315</name>
</gene>
<protein>
    <recommendedName>
        <fullName evidence="1">DNA ligase</fullName>
        <ecNumber evidence="1">6.5.1.2</ecNumber>
    </recommendedName>
    <alternativeName>
        <fullName evidence="1">Polydeoxyribonucleotide synthase [NAD(+)]</fullName>
    </alternativeName>
</protein>
<dbReference type="EC" id="6.5.1.2" evidence="1"/>
<dbReference type="EMBL" id="CP000750">
    <property type="protein sequence ID" value="ABS02803.1"/>
    <property type="molecule type" value="Genomic_DNA"/>
</dbReference>
<dbReference type="SMR" id="A6W7L4"/>
<dbReference type="STRING" id="266940.Krad_1315"/>
<dbReference type="KEGG" id="kra:Krad_1315"/>
<dbReference type="eggNOG" id="COG0272">
    <property type="taxonomic scope" value="Bacteria"/>
</dbReference>
<dbReference type="HOGENOM" id="CLU_007764_2_0_11"/>
<dbReference type="Proteomes" id="UP000001116">
    <property type="component" value="Chromosome"/>
</dbReference>
<dbReference type="GO" id="GO:0005829">
    <property type="term" value="C:cytosol"/>
    <property type="evidence" value="ECO:0007669"/>
    <property type="project" value="TreeGrafter"/>
</dbReference>
<dbReference type="GO" id="GO:0003911">
    <property type="term" value="F:DNA ligase (NAD+) activity"/>
    <property type="evidence" value="ECO:0007669"/>
    <property type="project" value="UniProtKB-UniRule"/>
</dbReference>
<dbReference type="GO" id="GO:0046872">
    <property type="term" value="F:metal ion binding"/>
    <property type="evidence" value="ECO:0007669"/>
    <property type="project" value="UniProtKB-KW"/>
</dbReference>
<dbReference type="GO" id="GO:0006281">
    <property type="term" value="P:DNA repair"/>
    <property type="evidence" value="ECO:0007669"/>
    <property type="project" value="UniProtKB-KW"/>
</dbReference>
<dbReference type="GO" id="GO:0006260">
    <property type="term" value="P:DNA replication"/>
    <property type="evidence" value="ECO:0007669"/>
    <property type="project" value="UniProtKB-KW"/>
</dbReference>
<dbReference type="CDD" id="cd17748">
    <property type="entry name" value="BRCT_DNA_ligase_like"/>
    <property type="match status" value="1"/>
</dbReference>
<dbReference type="CDD" id="cd00114">
    <property type="entry name" value="LIGANc"/>
    <property type="match status" value="1"/>
</dbReference>
<dbReference type="FunFam" id="1.10.150.20:FF:000006">
    <property type="entry name" value="DNA ligase"/>
    <property type="match status" value="1"/>
</dbReference>
<dbReference type="FunFam" id="2.40.50.140:FF:000012">
    <property type="entry name" value="DNA ligase"/>
    <property type="match status" value="1"/>
</dbReference>
<dbReference type="FunFam" id="3.30.470.30:FF:000001">
    <property type="entry name" value="DNA ligase"/>
    <property type="match status" value="1"/>
</dbReference>
<dbReference type="FunFam" id="3.40.50.10190:FF:000054">
    <property type="entry name" value="DNA ligase"/>
    <property type="match status" value="1"/>
</dbReference>
<dbReference type="Gene3D" id="6.20.10.30">
    <property type="match status" value="1"/>
</dbReference>
<dbReference type="Gene3D" id="1.10.150.20">
    <property type="entry name" value="5' to 3' exonuclease, C-terminal subdomain"/>
    <property type="match status" value="2"/>
</dbReference>
<dbReference type="Gene3D" id="3.40.50.10190">
    <property type="entry name" value="BRCT domain"/>
    <property type="match status" value="1"/>
</dbReference>
<dbReference type="Gene3D" id="3.30.470.30">
    <property type="entry name" value="DNA ligase/mRNA capping enzyme"/>
    <property type="match status" value="1"/>
</dbReference>
<dbReference type="Gene3D" id="1.10.287.610">
    <property type="entry name" value="Helix hairpin bin"/>
    <property type="match status" value="1"/>
</dbReference>
<dbReference type="Gene3D" id="2.40.50.140">
    <property type="entry name" value="Nucleic acid-binding proteins"/>
    <property type="match status" value="1"/>
</dbReference>
<dbReference type="HAMAP" id="MF_01588">
    <property type="entry name" value="DNA_ligase_A"/>
    <property type="match status" value="1"/>
</dbReference>
<dbReference type="InterPro" id="IPR001357">
    <property type="entry name" value="BRCT_dom"/>
</dbReference>
<dbReference type="InterPro" id="IPR036420">
    <property type="entry name" value="BRCT_dom_sf"/>
</dbReference>
<dbReference type="InterPro" id="IPR041663">
    <property type="entry name" value="DisA/LigA_HHH"/>
</dbReference>
<dbReference type="InterPro" id="IPR001679">
    <property type="entry name" value="DNA_ligase"/>
</dbReference>
<dbReference type="InterPro" id="IPR018239">
    <property type="entry name" value="DNA_ligase_AS"/>
</dbReference>
<dbReference type="InterPro" id="IPR033136">
    <property type="entry name" value="DNA_ligase_CS"/>
</dbReference>
<dbReference type="InterPro" id="IPR013839">
    <property type="entry name" value="DNAligase_adenylation"/>
</dbReference>
<dbReference type="InterPro" id="IPR013840">
    <property type="entry name" value="DNAligase_N"/>
</dbReference>
<dbReference type="InterPro" id="IPR012340">
    <property type="entry name" value="NA-bd_OB-fold"/>
</dbReference>
<dbReference type="InterPro" id="IPR004150">
    <property type="entry name" value="NAD_DNA_ligase_OB"/>
</dbReference>
<dbReference type="InterPro" id="IPR010994">
    <property type="entry name" value="RuvA_2-like"/>
</dbReference>
<dbReference type="InterPro" id="IPR004149">
    <property type="entry name" value="Znf_DNAligase_C4"/>
</dbReference>
<dbReference type="NCBIfam" id="TIGR00575">
    <property type="entry name" value="dnlj"/>
    <property type="match status" value="1"/>
</dbReference>
<dbReference type="NCBIfam" id="NF005932">
    <property type="entry name" value="PRK07956.1"/>
    <property type="match status" value="1"/>
</dbReference>
<dbReference type="PANTHER" id="PTHR23389">
    <property type="entry name" value="CHROMOSOME TRANSMISSION FIDELITY FACTOR 18"/>
    <property type="match status" value="1"/>
</dbReference>
<dbReference type="PANTHER" id="PTHR23389:SF9">
    <property type="entry name" value="DNA LIGASE"/>
    <property type="match status" value="1"/>
</dbReference>
<dbReference type="Pfam" id="PF00533">
    <property type="entry name" value="BRCT"/>
    <property type="match status" value="1"/>
</dbReference>
<dbReference type="Pfam" id="PF01653">
    <property type="entry name" value="DNA_ligase_aden"/>
    <property type="match status" value="1"/>
</dbReference>
<dbReference type="Pfam" id="PF03120">
    <property type="entry name" value="DNA_ligase_OB"/>
    <property type="match status" value="1"/>
</dbReference>
<dbReference type="Pfam" id="PF03119">
    <property type="entry name" value="DNA_ligase_ZBD"/>
    <property type="match status" value="1"/>
</dbReference>
<dbReference type="Pfam" id="PF12826">
    <property type="entry name" value="HHH_2"/>
    <property type="match status" value="1"/>
</dbReference>
<dbReference type="PIRSF" id="PIRSF001604">
    <property type="entry name" value="LigA"/>
    <property type="match status" value="1"/>
</dbReference>
<dbReference type="SMART" id="SM00292">
    <property type="entry name" value="BRCT"/>
    <property type="match status" value="1"/>
</dbReference>
<dbReference type="SMART" id="SM00532">
    <property type="entry name" value="LIGANc"/>
    <property type="match status" value="1"/>
</dbReference>
<dbReference type="SUPFAM" id="SSF52113">
    <property type="entry name" value="BRCT domain"/>
    <property type="match status" value="1"/>
</dbReference>
<dbReference type="SUPFAM" id="SSF56091">
    <property type="entry name" value="DNA ligase/mRNA capping enzyme, catalytic domain"/>
    <property type="match status" value="1"/>
</dbReference>
<dbReference type="SUPFAM" id="SSF50249">
    <property type="entry name" value="Nucleic acid-binding proteins"/>
    <property type="match status" value="1"/>
</dbReference>
<dbReference type="SUPFAM" id="SSF47781">
    <property type="entry name" value="RuvA domain 2-like"/>
    <property type="match status" value="1"/>
</dbReference>
<dbReference type="PROSITE" id="PS50172">
    <property type="entry name" value="BRCT"/>
    <property type="match status" value="1"/>
</dbReference>
<dbReference type="PROSITE" id="PS01055">
    <property type="entry name" value="DNA_LIGASE_N1"/>
    <property type="match status" value="1"/>
</dbReference>
<dbReference type="PROSITE" id="PS01056">
    <property type="entry name" value="DNA_LIGASE_N2"/>
    <property type="match status" value="1"/>
</dbReference>
<sequence length="696" mass="75120">MDTVDGGDVPSEARHRWEDLVAQIEAARFAYYVRNSSPLSDGQYDALERELRALEEQHPQLRTPDSPTQTVGGTFSTEFTTVDHPERMLSLDNAFSTDELSAWAARVEREVGAGARYLCEPKIDGLAIDLVYEDGRLVRGVTRGDGRTGEDVTFNVRTVEDVPHRLTGADVPEFLEVRGEVFFHLDGFAAINAGLVEAGKPPFANPRNAAAGSLRQKDPRVTATRPLRMLVHGVGARRGMENDTQSGAYEKLAAWGLPTSPRVKVVDTLDEVAEYVRFYGEHRHDVEHEIDGVVVKVDQVPLQRRLGSTSRAPRWAIAYKYPPEEVTTSLLDIQVNVGRTGRVTPFAVLEPVKVAGSTVAMATLHNASEVVRKGVLIGDTVVVRKAGDVIPEVLGPVVESRTGAEREFVMPTVCPECGTPLAHQRADDVDIRCPNSRSCPAQLRERVFHLAGRGSFDVEALGDKAAAALLQAGVIADEGDLFTLTEDDLVGVPLFTTKAGTVSANGRRLLANLHDRKDQPLWRVLVGLSIRHVGPTAARALADRFGSMEAIEAATAEDIASAEGVGPTIAEAVVEWLAVDWHRDVVRKWREAGVRMADERDESTPRTLEGLTIVVTGSLSGFSRDEAKEAVLSRGGKASSAVSKKTSFVVVGEAAGSKADKAEQLGVPVLDEEGFVALLEGGPDAVARPAEEPGQG</sequence>
<accession>A6W7L4</accession>
<proteinExistence type="inferred from homology"/>
<keyword id="KW-0227">DNA damage</keyword>
<keyword id="KW-0234">DNA repair</keyword>
<keyword id="KW-0235">DNA replication</keyword>
<keyword id="KW-0436">Ligase</keyword>
<keyword id="KW-0460">Magnesium</keyword>
<keyword id="KW-0464">Manganese</keyword>
<keyword id="KW-0479">Metal-binding</keyword>
<keyword id="KW-0520">NAD</keyword>
<keyword id="KW-1185">Reference proteome</keyword>
<keyword id="KW-0862">Zinc</keyword>
<feature type="chain" id="PRO_0000340355" description="DNA ligase">
    <location>
        <begin position="1"/>
        <end position="696"/>
    </location>
</feature>
<feature type="domain" description="BRCT" evidence="1">
    <location>
        <begin position="603"/>
        <end position="692"/>
    </location>
</feature>
<feature type="active site" description="N6-AMP-lysine intermediate" evidence="1">
    <location>
        <position position="122"/>
    </location>
</feature>
<feature type="binding site" evidence="1">
    <location>
        <begin position="41"/>
        <end position="45"/>
    </location>
    <ligand>
        <name>NAD(+)</name>
        <dbReference type="ChEBI" id="CHEBI:57540"/>
    </ligand>
</feature>
<feature type="binding site" evidence="1">
    <location>
        <begin position="90"/>
        <end position="91"/>
    </location>
    <ligand>
        <name>NAD(+)</name>
        <dbReference type="ChEBI" id="CHEBI:57540"/>
    </ligand>
</feature>
<feature type="binding site" evidence="1">
    <location>
        <position position="120"/>
    </location>
    <ligand>
        <name>NAD(+)</name>
        <dbReference type="ChEBI" id="CHEBI:57540"/>
    </ligand>
</feature>
<feature type="binding site" evidence="1">
    <location>
        <position position="143"/>
    </location>
    <ligand>
        <name>NAD(+)</name>
        <dbReference type="ChEBI" id="CHEBI:57540"/>
    </ligand>
</feature>
<feature type="binding site" evidence="1">
    <location>
        <position position="180"/>
    </location>
    <ligand>
        <name>NAD(+)</name>
        <dbReference type="ChEBI" id="CHEBI:57540"/>
    </ligand>
</feature>
<feature type="binding site" evidence="1">
    <location>
        <position position="296"/>
    </location>
    <ligand>
        <name>NAD(+)</name>
        <dbReference type="ChEBI" id="CHEBI:57540"/>
    </ligand>
</feature>
<feature type="binding site" evidence="1">
    <location>
        <position position="320"/>
    </location>
    <ligand>
        <name>NAD(+)</name>
        <dbReference type="ChEBI" id="CHEBI:57540"/>
    </ligand>
</feature>
<feature type="binding site" evidence="1">
    <location>
        <position position="414"/>
    </location>
    <ligand>
        <name>Zn(2+)</name>
        <dbReference type="ChEBI" id="CHEBI:29105"/>
    </ligand>
</feature>
<feature type="binding site" evidence="1">
    <location>
        <position position="417"/>
    </location>
    <ligand>
        <name>Zn(2+)</name>
        <dbReference type="ChEBI" id="CHEBI:29105"/>
    </ligand>
</feature>
<feature type="binding site" evidence="1">
    <location>
        <position position="433"/>
    </location>
    <ligand>
        <name>Zn(2+)</name>
        <dbReference type="ChEBI" id="CHEBI:29105"/>
    </ligand>
</feature>
<feature type="binding site" evidence="1">
    <location>
        <position position="439"/>
    </location>
    <ligand>
        <name>Zn(2+)</name>
        <dbReference type="ChEBI" id="CHEBI:29105"/>
    </ligand>
</feature>
<comment type="function">
    <text evidence="1">DNA ligase that catalyzes the formation of phosphodiester linkages between 5'-phosphoryl and 3'-hydroxyl groups in double-stranded DNA using NAD as a coenzyme and as the energy source for the reaction. It is essential for DNA replication and repair of damaged DNA.</text>
</comment>
<comment type="catalytic activity">
    <reaction evidence="1">
        <text>NAD(+) + (deoxyribonucleotide)n-3'-hydroxyl + 5'-phospho-(deoxyribonucleotide)m = (deoxyribonucleotide)n+m + AMP + beta-nicotinamide D-nucleotide.</text>
        <dbReference type="EC" id="6.5.1.2"/>
    </reaction>
</comment>
<comment type="cofactor">
    <cofactor evidence="1">
        <name>Mg(2+)</name>
        <dbReference type="ChEBI" id="CHEBI:18420"/>
    </cofactor>
    <cofactor evidence="1">
        <name>Mn(2+)</name>
        <dbReference type="ChEBI" id="CHEBI:29035"/>
    </cofactor>
</comment>
<comment type="similarity">
    <text evidence="1">Belongs to the NAD-dependent DNA ligase family. LigA subfamily.</text>
</comment>
<name>DNLJ_KINRD</name>
<evidence type="ECO:0000255" key="1">
    <source>
        <dbReference type="HAMAP-Rule" id="MF_01588"/>
    </source>
</evidence>